<name>FIS_ECO81</name>
<keyword id="KW-0010">Activator</keyword>
<keyword id="KW-0238">DNA-binding</keyword>
<keyword id="KW-0804">Transcription</keyword>
<keyword id="KW-0805">Transcription regulation</keyword>
<accession>B7N0Q5</accession>
<reference key="1">
    <citation type="journal article" date="2009" name="PLoS Genet.">
        <title>Organised genome dynamics in the Escherichia coli species results in highly diverse adaptive paths.</title>
        <authorList>
            <person name="Touchon M."/>
            <person name="Hoede C."/>
            <person name="Tenaillon O."/>
            <person name="Barbe V."/>
            <person name="Baeriswyl S."/>
            <person name="Bidet P."/>
            <person name="Bingen E."/>
            <person name="Bonacorsi S."/>
            <person name="Bouchier C."/>
            <person name="Bouvet O."/>
            <person name="Calteau A."/>
            <person name="Chiapello H."/>
            <person name="Clermont O."/>
            <person name="Cruveiller S."/>
            <person name="Danchin A."/>
            <person name="Diard M."/>
            <person name="Dossat C."/>
            <person name="Karoui M.E."/>
            <person name="Frapy E."/>
            <person name="Garry L."/>
            <person name="Ghigo J.M."/>
            <person name="Gilles A.M."/>
            <person name="Johnson J."/>
            <person name="Le Bouguenec C."/>
            <person name="Lescat M."/>
            <person name="Mangenot S."/>
            <person name="Martinez-Jehanne V."/>
            <person name="Matic I."/>
            <person name="Nassif X."/>
            <person name="Oztas S."/>
            <person name="Petit M.A."/>
            <person name="Pichon C."/>
            <person name="Rouy Z."/>
            <person name="Ruf C.S."/>
            <person name="Schneider D."/>
            <person name="Tourret J."/>
            <person name="Vacherie B."/>
            <person name="Vallenet D."/>
            <person name="Medigue C."/>
            <person name="Rocha E.P.C."/>
            <person name="Denamur E."/>
        </authorList>
    </citation>
    <scope>NUCLEOTIDE SEQUENCE [LARGE SCALE GENOMIC DNA]</scope>
    <source>
        <strain>ED1a</strain>
    </source>
</reference>
<gene>
    <name evidence="1" type="primary">fis</name>
    <name type="ordered locus">ECED1_3920</name>
</gene>
<dbReference type="EMBL" id="CU928162">
    <property type="protein sequence ID" value="CAR09923.1"/>
    <property type="molecule type" value="Genomic_DNA"/>
</dbReference>
<dbReference type="RefSeq" id="WP_000462905.1">
    <property type="nucleotide sequence ID" value="NC_011745.1"/>
</dbReference>
<dbReference type="SMR" id="B7N0Q5"/>
<dbReference type="GeneID" id="98390389"/>
<dbReference type="KEGG" id="ecq:ECED1_3920"/>
<dbReference type="HOGENOM" id="CLU_158040_3_0_6"/>
<dbReference type="Proteomes" id="UP000000748">
    <property type="component" value="Chromosome"/>
</dbReference>
<dbReference type="GO" id="GO:0003700">
    <property type="term" value="F:DNA-binding transcription factor activity"/>
    <property type="evidence" value="ECO:0007669"/>
    <property type="project" value="UniProtKB-UniRule"/>
</dbReference>
<dbReference type="GO" id="GO:0043565">
    <property type="term" value="F:sequence-specific DNA binding"/>
    <property type="evidence" value="ECO:0007669"/>
    <property type="project" value="InterPro"/>
</dbReference>
<dbReference type="FunFam" id="1.10.10.60:FF:000006">
    <property type="entry name" value="DNA-binding protein Fis"/>
    <property type="match status" value="1"/>
</dbReference>
<dbReference type="Gene3D" id="1.10.10.60">
    <property type="entry name" value="Homeodomain-like"/>
    <property type="match status" value="1"/>
</dbReference>
<dbReference type="HAMAP" id="MF_00166">
    <property type="entry name" value="DNA_binding_Fis"/>
    <property type="match status" value="1"/>
</dbReference>
<dbReference type="InterPro" id="IPR005412">
    <property type="entry name" value="Fis_DNA-bd"/>
</dbReference>
<dbReference type="InterPro" id="IPR009057">
    <property type="entry name" value="Homeodomain-like_sf"/>
</dbReference>
<dbReference type="InterPro" id="IPR002197">
    <property type="entry name" value="HTH_Fis"/>
</dbReference>
<dbReference type="InterPro" id="IPR050207">
    <property type="entry name" value="Trans_regulatory_Fis"/>
</dbReference>
<dbReference type="NCBIfam" id="NF001659">
    <property type="entry name" value="PRK00430.1"/>
    <property type="match status" value="1"/>
</dbReference>
<dbReference type="PANTHER" id="PTHR47918">
    <property type="entry name" value="DNA-BINDING PROTEIN FIS"/>
    <property type="match status" value="1"/>
</dbReference>
<dbReference type="PANTHER" id="PTHR47918:SF1">
    <property type="entry name" value="DNA-BINDING PROTEIN FIS"/>
    <property type="match status" value="1"/>
</dbReference>
<dbReference type="Pfam" id="PF02954">
    <property type="entry name" value="HTH_8"/>
    <property type="match status" value="1"/>
</dbReference>
<dbReference type="PIRSF" id="PIRSF002097">
    <property type="entry name" value="DNA-binding_Fis"/>
    <property type="match status" value="1"/>
</dbReference>
<dbReference type="PRINTS" id="PR01591">
    <property type="entry name" value="DNABINDNGFIS"/>
</dbReference>
<dbReference type="PRINTS" id="PR01590">
    <property type="entry name" value="HTHFIS"/>
</dbReference>
<dbReference type="SUPFAM" id="SSF46689">
    <property type="entry name" value="Homeodomain-like"/>
    <property type="match status" value="1"/>
</dbReference>
<protein>
    <recommendedName>
        <fullName evidence="1">DNA-binding protein Fis</fullName>
    </recommendedName>
</protein>
<comment type="function">
    <text evidence="1">Activates ribosomal RNA transcription. Plays a direct role in upstream activation of rRNA promoters.</text>
</comment>
<comment type="subunit">
    <text evidence="1">Homodimer.</text>
</comment>
<comment type="similarity">
    <text evidence="1">Belongs to the transcriptional regulatory Fis family.</text>
</comment>
<evidence type="ECO:0000255" key="1">
    <source>
        <dbReference type="HAMAP-Rule" id="MF_00166"/>
    </source>
</evidence>
<organism>
    <name type="scientific">Escherichia coli O81 (strain ED1a)</name>
    <dbReference type="NCBI Taxonomy" id="585397"/>
    <lineage>
        <taxon>Bacteria</taxon>
        <taxon>Pseudomonadati</taxon>
        <taxon>Pseudomonadota</taxon>
        <taxon>Gammaproteobacteria</taxon>
        <taxon>Enterobacterales</taxon>
        <taxon>Enterobacteriaceae</taxon>
        <taxon>Escherichia</taxon>
    </lineage>
</organism>
<sequence>MFEQRVNSDVLTVSTVNSQDQVTQKPLRDSVKQALKNYFAQLNGQDVNDLYELVLAEVEQPLLDMVMQYTRGNQTRAALMMGINRGTLRKKLKKYGMN</sequence>
<feature type="chain" id="PRO_1000123607" description="DNA-binding protein Fis">
    <location>
        <begin position="1"/>
        <end position="98"/>
    </location>
</feature>
<feature type="DNA-binding region" description="H-T-H motif" evidence="1">
    <location>
        <begin position="74"/>
        <end position="93"/>
    </location>
</feature>
<proteinExistence type="inferred from homology"/>